<organism>
    <name type="scientific">Mycoplasma mycoides</name>
    <dbReference type="NCBI Taxonomy" id="2102"/>
    <lineage>
        <taxon>Bacteria</taxon>
        <taxon>Bacillati</taxon>
        <taxon>Mycoplasmatota</taxon>
        <taxon>Mollicutes</taxon>
        <taxon>Mycoplasmataceae</taxon>
        <taxon>Mycoplasma</taxon>
    </lineage>
</organism>
<name>YFF2_MYCMY</name>
<accession>Q01445</accession>
<dbReference type="EMBL" id="M91593">
    <property type="protein sequence ID" value="AAA25442.1"/>
    <property type="molecule type" value="Genomic_DNA"/>
</dbReference>
<dbReference type="PIR" id="S35482">
    <property type="entry name" value="S35482"/>
</dbReference>
<dbReference type="SMR" id="Q01445"/>
<dbReference type="GO" id="GO:0008168">
    <property type="term" value="F:methyltransferase activity"/>
    <property type="evidence" value="ECO:0007669"/>
    <property type="project" value="InterPro"/>
</dbReference>
<dbReference type="GO" id="GO:0006364">
    <property type="term" value="P:rRNA processing"/>
    <property type="evidence" value="ECO:0007669"/>
    <property type="project" value="InterPro"/>
</dbReference>
<dbReference type="Gene3D" id="3.40.1280.10">
    <property type="match status" value="1"/>
</dbReference>
<dbReference type="InterPro" id="IPR029028">
    <property type="entry name" value="Alpha/beta_knot_MTases"/>
</dbReference>
<dbReference type="InterPro" id="IPR003742">
    <property type="entry name" value="RlmH-like"/>
</dbReference>
<dbReference type="InterPro" id="IPR029026">
    <property type="entry name" value="tRNA_m1G_MTases_N"/>
</dbReference>
<dbReference type="Pfam" id="PF02590">
    <property type="entry name" value="SPOUT_MTase"/>
    <property type="match status" value="1"/>
</dbReference>
<dbReference type="SUPFAM" id="SSF75217">
    <property type="entry name" value="alpha/beta knot"/>
    <property type="match status" value="1"/>
</dbReference>
<sequence>MKIKIICFGKLDKKFYIDAFNDYFKRLEKYADIEIIELKEEINGELNKIKELNSD</sequence>
<protein>
    <recommendedName>
        <fullName>Uncharacterized protein in ffh 3'region</fullName>
    </recommendedName>
</protein>
<feature type="chain" id="PRO_0000066210" description="Uncharacterized protein in ffh 3'region">
    <location>
        <begin position="1"/>
        <end position="55" status="greater than"/>
    </location>
</feature>
<feature type="non-terminal residue">
    <location>
        <position position="55"/>
    </location>
</feature>
<proteinExistence type="predicted"/>
<reference key="1">
    <citation type="journal article" date="1992" name="Nucleic Acids Res.">
        <title>A Mycoplasma protein homologous to mammalian SRP54 recognizes a highly conserved domain of SRP RNA.</title>
        <authorList>
            <person name="Samuelsson T.B."/>
        </authorList>
    </citation>
    <scope>NUCLEOTIDE SEQUENCE [GENOMIC DNA]</scope>
</reference>